<reference key="1">
    <citation type="journal article" date="2006" name="J. Bacteriol.">
        <title>The genome sequence of the obligately chemolithoautotrophic, facultatively anaerobic bacterium Thiobacillus denitrificans.</title>
        <authorList>
            <person name="Beller H.R."/>
            <person name="Chain P.S."/>
            <person name="Letain T.E."/>
            <person name="Chakicherla A."/>
            <person name="Larimer F.W."/>
            <person name="Richardson P.M."/>
            <person name="Coleman M.A."/>
            <person name="Wood A.P."/>
            <person name="Kelly D.P."/>
        </authorList>
    </citation>
    <scope>NUCLEOTIDE SEQUENCE [LARGE SCALE GENOMIC DNA]</scope>
    <source>
        <strain>ATCC 25259 / T1</strain>
    </source>
</reference>
<accession>Q3SMR4</accession>
<proteinExistence type="inferred from homology"/>
<gene>
    <name type="ordered locus">Tbd_0024</name>
</gene>
<dbReference type="EMBL" id="CP000116">
    <property type="protein sequence ID" value="AAZ95977.1"/>
    <property type="molecule type" value="Genomic_DNA"/>
</dbReference>
<dbReference type="RefSeq" id="WP_011310537.1">
    <property type="nucleotide sequence ID" value="NC_007404.1"/>
</dbReference>
<dbReference type="SMR" id="Q3SMR4"/>
<dbReference type="STRING" id="292415.Tbd_0024"/>
<dbReference type="KEGG" id="tbd:Tbd_0024"/>
<dbReference type="eggNOG" id="COG2924">
    <property type="taxonomic scope" value="Bacteria"/>
</dbReference>
<dbReference type="HOGENOM" id="CLU_170994_0_0_4"/>
<dbReference type="OrthoDB" id="9804318at2"/>
<dbReference type="Proteomes" id="UP000008291">
    <property type="component" value="Chromosome"/>
</dbReference>
<dbReference type="GO" id="GO:0005829">
    <property type="term" value="C:cytosol"/>
    <property type="evidence" value="ECO:0007669"/>
    <property type="project" value="TreeGrafter"/>
</dbReference>
<dbReference type="GO" id="GO:0005506">
    <property type="term" value="F:iron ion binding"/>
    <property type="evidence" value="ECO:0007669"/>
    <property type="project" value="UniProtKB-UniRule"/>
</dbReference>
<dbReference type="GO" id="GO:0034599">
    <property type="term" value="P:cellular response to oxidative stress"/>
    <property type="evidence" value="ECO:0007669"/>
    <property type="project" value="TreeGrafter"/>
</dbReference>
<dbReference type="FunFam" id="1.10.3880.10:FF:000001">
    <property type="entry name" value="Probable Fe(2+)-trafficking protein"/>
    <property type="match status" value="1"/>
</dbReference>
<dbReference type="Gene3D" id="1.10.3880.10">
    <property type="entry name" value="Fe(II) trafficking protein YggX"/>
    <property type="match status" value="1"/>
</dbReference>
<dbReference type="HAMAP" id="MF_00686">
    <property type="entry name" value="Fe_traffic_YggX"/>
    <property type="match status" value="1"/>
</dbReference>
<dbReference type="InterPro" id="IPR007457">
    <property type="entry name" value="Fe_traffick_prot_YggX"/>
</dbReference>
<dbReference type="InterPro" id="IPR036766">
    <property type="entry name" value="Fe_traffick_prot_YggX_sf"/>
</dbReference>
<dbReference type="NCBIfam" id="NF003817">
    <property type="entry name" value="PRK05408.1"/>
    <property type="match status" value="1"/>
</dbReference>
<dbReference type="PANTHER" id="PTHR36965">
    <property type="entry name" value="FE(2+)-TRAFFICKING PROTEIN-RELATED"/>
    <property type="match status" value="1"/>
</dbReference>
<dbReference type="PANTHER" id="PTHR36965:SF1">
    <property type="entry name" value="FE(2+)-TRAFFICKING PROTEIN-RELATED"/>
    <property type="match status" value="1"/>
</dbReference>
<dbReference type="Pfam" id="PF04362">
    <property type="entry name" value="Iron_traffic"/>
    <property type="match status" value="1"/>
</dbReference>
<dbReference type="PIRSF" id="PIRSF029827">
    <property type="entry name" value="Fe_traffic_YggX"/>
    <property type="match status" value="1"/>
</dbReference>
<dbReference type="SUPFAM" id="SSF111148">
    <property type="entry name" value="YggX-like"/>
    <property type="match status" value="1"/>
</dbReference>
<keyword id="KW-0408">Iron</keyword>
<keyword id="KW-1185">Reference proteome</keyword>
<sequence length="91" mass="10275">MTRMVNCVKLGREAEGLAFQPVPGDLGKKIFENVSKEAWAGWQRHQTMLINENRLNLADPQARSYLMEQMERYFFGGGNVDAAAGYVPPTR</sequence>
<feature type="chain" id="PRO_0000246120" description="Probable Fe(2+)-trafficking protein">
    <location>
        <begin position="1"/>
        <end position="91"/>
    </location>
</feature>
<organism>
    <name type="scientific">Thiobacillus denitrificans (strain ATCC 25259 / T1)</name>
    <dbReference type="NCBI Taxonomy" id="292415"/>
    <lineage>
        <taxon>Bacteria</taxon>
        <taxon>Pseudomonadati</taxon>
        <taxon>Pseudomonadota</taxon>
        <taxon>Betaproteobacteria</taxon>
        <taxon>Nitrosomonadales</taxon>
        <taxon>Thiobacillaceae</taxon>
        <taxon>Thiobacillus</taxon>
    </lineage>
</organism>
<name>FETP_THIDA</name>
<evidence type="ECO:0000255" key="1">
    <source>
        <dbReference type="HAMAP-Rule" id="MF_00686"/>
    </source>
</evidence>
<comment type="function">
    <text evidence="1">Could be a mediator in iron transactions between iron acquisition and iron-requiring processes, such as synthesis and/or repair of Fe-S clusters in biosynthetic enzymes.</text>
</comment>
<comment type="similarity">
    <text evidence="1">Belongs to the Fe(2+)-trafficking protein family.</text>
</comment>
<protein>
    <recommendedName>
        <fullName evidence="1">Probable Fe(2+)-trafficking protein</fullName>
    </recommendedName>
</protein>